<keyword id="KW-0007">Acetylation</keyword>
<keyword id="KW-0963">Cytoplasm</keyword>
<keyword id="KW-1017">Isopeptide bond</keyword>
<keyword id="KW-0560">Oxidoreductase</keyword>
<keyword id="KW-0597">Phosphoprotein</keyword>
<keyword id="KW-1185">Reference proteome</keyword>
<keyword id="KW-0832">Ubl conjugation</keyword>
<feature type="chain" id="PRO_0000290025" description="Sestrin-2">
    <location>
        <begin position="1"/>
        <end position="480"/>
    </location>
</feature>
<feature type="region of interest" description="Disordered" evidence="3">
    <location>
        <begin position="20"/>
        <end position="45"/>
    </location>
</feature>
<feature type="region of interest" description="N-terminal domain; mediates the alkylhydroperoxide reductase activity" evidence="1">
    <location>
        <begin position="66"/>
        <end position="239"/>
    </location>
</feature>
<feature type="region of interest" description="Disordered" evidence="3">
    <location>
        <begin position="222"/>
        <end position="252"/>
    </location>
</feature>
<feature type="region of interest" description="C-terminal domain; mediates TORC1 regulation" evidence="1">
    <location>
        <begin position="308"/>
        <end position="480"/>
    </location>
</feature>
<feature type="active site" description="Cysteine sulfenic acid (-SOH) intermediate" evidence="1">
    <location>
        <position position="125"/>
    </location>
</feature>
<feature type="binding site" evidence="1">
    <location>
        <begin position="374"/>
        <end position="377"/>
    </location>
    <ligand>
        <name>L-leucine</name>
        <dbReference type="ChEBI" id="CHEBI:57427"/>
    </ligand>
</feature>
<feature type="binding site" evidence="1">
    <location>
        <position position="386"/>
    </location>
    <ligand>
        <name>L-leucine</name>
        <dbReference type="ChEBI" id="CHEBI:57427"/>
    </ligand>
</feature>
<feature type="binding site" evidence="1">
    <location>
        <position position="451"/>
    </location>
    <ligand>
        <name>L-leucine</name>
        <dbReference type="ChEBI" id="CHEBI:57427"/>
    </ligand>
</feature>
<feature type="modified residue" description="N-acetylmethionine" evidence="1">
    <location>
        <position position="1"/>
    </location>
</feature>
<feature type="modified residue" description="Phosphoserine" evidence="1">
    <location>
        <position position="249"/>
    </location>
</feature>
<feature type="cross-link" description="Glycyl lysine isopeptide (Lys-Gly) (interchain with G-Cter in ubiquitin)" evidence="1">
    <location>
        <position position="175"/>
    </location>
</feature>
<proteinExistence type="evidence at transcript level"/>
<protein>
    <recommendedName>
        <fullName evidence="4">Sestrin-2</fullName>
        <ecNumber evidence="1">1.11.1.-</ecNumber>
    </recommendedName>
</protein>
<gene>
    <name evidence="1" type="primary">SESN2</name>
</gene>
<sequence>MIVADSECRAELKDYLRFAPGGVGDSGPGEEQRESRARRGPRGPSAFIPVEEVLREGAESLEQHLGLEALMSSGRVDNLAVVMGLHPDYFTSFWRLHYLPLHTDGPLASSWRHYIAIMAAARHQCSYLVGSHMAEFLQTGGDPEWLLGLHRAPEKLRKLSEINKLLAHRPWLITKEHIQALLKTGEHTWSLAELIQALVLLTHCHSLSSFVFGCGILPEGDADGSPAPQAPTPPSEQSSPPSRDPLNNSGGFESARDVEALMERMRQLQESLLRDEGTSQEEMESRFELEKSESLLVTPSADILEPSPHPDMLCFVEDPAFGYEDFTRRGAQAPPTFRAQDYTWEDHGYSLIQRLYPEGGQLLDEKFQAAYSLTYNTIAMLSGVDTSVLRRAIWNYIHCVFGIRYDDYDYGEVNQLLERNLKVYIKTVACYPEKTTRRMYNLFWRHFRHSEKVHVNLLLLEARMQAALLYALRAITRYMT</sequence>
<reference key="1">
    <citation type="submission" date="2004-11" db="EMBL/GenBank/DDBJ databases">
        <authorList>
            <consortium name="The German cDNA consortium"/>
        </authorList>
    </citation>
    <scope>NUCLEOTIDE SEQUENCE [LARGE SCALE MRNA]</scope>
    <source>
        <tissue>Kidney</tissue>
    </source>
</reference>
<evidence type="ECO:0000250" key="1">
    <source>
        <dbReference type="UniProtKB" id="P58004"/>
    </source>
</evidence>
<evidence type="ECO:0000250" key="2">
    <source>
        <dbReference type="UniProtKB" id="P58043"/>
    </source>
</evidence>
<evidence type="ECO:0000256" key="3">
    <source>
        <dbReference type="SAM" id="MobiDB-lite"/>
    </source>
</evidence>
<evidence type="ECO:0000305" key="4"/>
<dbReference type="EC" id="1.11.1.-" evidence="1"/>
<dbReference type="EMBL" id="CR858363">
    <property type="protein sequence ID" value="CAH90593.1"/>
    <property type="molecule type" value="mRNA"/>
</dbReference>
<dbReference type="RefSeq" id="NP_001125320.1">
    <property type="nucleotide sequence ID" value="NM_001131848.1"/>
</dbReference>
<dbReference type="SMR" id="Q5RCB4"/>
<dbReference type="STRING" id="9601.ENSPPYP00000001899"/>
<dbReference type="GeneID" id="100172219"/>
<dbReference type="KEGG" id="pon:100172219"/>
<dbReference type="CTD" id="83667"/>
<dbReference type="eggNOG" id="KOG3746">
    <property type="taxonomic scope" value="Eukaryota"/>
</dbReference>
<dbReference type="InParanoid" id="Q5RCB4"/>
<dbReference type="OrthoDB" id="337464at2759"/>
<dbReference type="Proteomes" id="UP000001595">
    <property type="component" value="Unplaced"/>
</dbReference>
<dbReference type="GO" id="GO:1990316">
    <property type="term" value="C:Atg1/ULK1 kinase complex"/>
    <property type="evidence" value="ECO:0000250"/>
    <property type="project" value="UniProtKB"/>
</dbReference>
<dbReference type="GO" id="GO:0005737">
    <property type="term" value="C:cytoplasm"/>
    <property type="evidence" value="ECO:0000250"/>
    <property type="project" value="UniProtKB"/>
</dbReference>
<dbReference type="GO" id="GO:0005634">
    <property type="term" value="C:nucleus"/>
    <property type="evidence" value="ECO:0007669"/>
    <property type="project" value="InterPro"/>
</dbReference>
<dbReference type="GO" id="GO:0070728">
    <property type="term" value="F:L-leucine binding"/>
    <property type="evidence" value="ECO:0000250"/>
    <property type="project" value="UniProtKB"/>
</dbReference>
<dbReference type="GO" id="GO:0004601">
    <property type="term" value="F:peroxidase activity"/>
    <property type="evidence" value="ECO:0000250"/>
    <property type="project" value="UniProtKB"/>
</dbReference>
<dbReference type="GO" id="GO:0140311">
    <property type="term" value="F:protein sequestering activity"/>
    <property type="evidence" value="ECO:0000250"/>
    <property type="project" value="UniProtKB"/>
</dbReference>
<dbReference type="GO" id="GO:0044877">
    <property type="term" value="F:protein-containing complex binding"/>
    <property type="evidence" value="ECO:0000250"/>
    <property type="project" value="UniProtKB"/>
</dbReference>
<dbReference type="GO" id="GO:0098869">
    <property type="term" value="P:cellular oxidant detoxification"/>
    <property type="evidence" value="ECO:0000250"/>
    <property type="project" value="UniProtKB"/>
</dbReference>
<dbReference type="GO" id="GO:0071233">
    <property type="term" value="P:cellular response to L-leucine"/>
    <property type="evidence" value="ECO:0007669"/>
    <property type="project" value="TreeGrafter"/>
</dbReference>
<dbReference type="GO" id="GO:1990253">
    <property type="term" value="P:cellular response to leucine starvation"/>
    <property type="evidence" value="ECO:0000250"/>
    <property type="project" value="UniProtKB"/>
</dbReference>
<dbReference type="GO" id="GO:0034599">
    <property type="term" value="P:cellular response to oxidative stress"/>
    <property type="evidence" value="ECO:0000250"/>
    <property type="project" value="UniProtKB"/>
</dbReference>
<dbReference type="GO" id="GO:0030330">
    <property type="term" value="P:DNA damage response, signal transduction by p53 class mediator"/>
    <property type="evidence" value="ECO:0000250"/>
    <property type="project" value="UniProtKB"/>
</dbReference>
<dbReference type="GO" id="GO:0030308">
    <property type="term" value="P:negative regulation of cell growth"/>
    <property type="evidence" value="ECO:0000250"/>
    <property type="project" value="UniProtKB"/>
</dbReference>
<dbReference type="GO" id="GO:1904262">
    <property type="term" value="P:negative regulation of TORC1 signaling"/>
    <property type="evidence" value="ECO:0000250"/>
    <property type="project" value="UniProtKB"/>
</dbReference>
<dbReference type="GO" id="GO:1902010">
    <property type="term" value="P:negative regulation of translation in response to endoplasmic reticulum stress"/>
    <property type="evidence" value="ECO:0000250"/>
    <property type="project" value="UniProtKB"/>
</dbReference>
<dbReference type="GO" id="GO:0016239">
    <property type="term" value="P:positive regulation of macroautophagy"/>
    <property type="evidence" value="ECO:0000250"/>
    <property type="project" value="UniProtKB"/>
</dbReference>
<dbReference type="GO" id="GO:1900182">
    <property type="term" value="P:positive regulation of protein localization to nucleus"/>
    <property type="evidence" value="ECO:0000250"/>
    <property type="project" value="UniProtKB"/>
</dbReference>
<dbReference type="GO" id="GO:0072593">
    <property type="term" value="P:reactive oxygen species metabolic process"/>
    <property type="evidence" value="ECO:0000250"/>
    <property type="project" value="UniProtKB"/>
</dbReference>
<dbReference type="GO" id="GO:0001932">
    <property type="term" value="P:regulation of protein phosphorylation"/>
    <property type="evidence" value="ECO:0000250"/>
    <property type="project" value="UniProtKB"/>
</dbReference>
<dbReference type="GO" id="GO:1901031">
    <property type="term" value="P:regulation of response to reactive oxygen species"/>
    <property type="evidence" value="ECO:0007669"/>
    <property type="project" value="InterPro"/>
</dbReference>
<dbReference type="FunFam" id="1.20.1290.10:FF:000001">
    <property type="entry name" value="Sestrin 1"/>
    <property type="match status" value="1"/>
</dbReference>
<dbReference type="Gene3D" id="1.20.1290.10">
    <property type="entry name" value="AhpD-like"/>
    <property type="match status" value="1"/>
</dbReference>
<dbReference type="InterPro" id="IPR029032">
    <property type="entry name" value="AhpD-like"/>
</dbReference>
<dbReference type="InterPro" id="IPR006730">
    <property type="entry name" value="Sestrin"/>
</dbReference>
<dbReference type="PANTHER" id="PTHR12474">
    <property type="entry name" value="P53 REGULATED PA26 NUCLEAR PROTEIN SESTRIN"/>
    <property type="match status" value="1"/>
</dbReference>
<dbReference type="PANTHER" id="PTHR12474:SF2">
    <property type="entry name" value="SESTRIN-2"/>
    <property type="match status" value="1"/>
</dbReference>
<dbReference type="Pfam" id="PF04636">
    <property type="entry name" value="PA26"/>
    <property type="match status" value="1"/>
</dbReference>
<dbReference type="SUPFAM" id="SSF69118">
    <property type="entry name" value="AhpD-like"/>
    <property type="match status" value="1"/>
</dbReference>
<organism>
    <name type="scientific">Pongo abelii</name>
    <name type="common">Sumatran orangutan</name>
    <name type="synonym">Pongo pygmaeus abelii</name>
    <dbReference type="NCBI Taxonomy" id="9601"/>
    <lineage>
        <taxon>Eukaryota</taxon>
        <taxon>Metazoa</taxon>
        <taxon>Chordata</taxon>
        <taxon>Craniata</taxon>
        <taxon>Vertebrata</taxon>
        <taxon>Euteleostomi</taxon>
        <taxon>Mammalia</taxon>
        <taxon>Eutheria</taxon>
        <taxon>Euarchontoglires</taxon>
        <taxon>Primates</taxon>
        <taxon>Haplorrhini</taxon>
        <taxon>Catarrhini</taxon>
        <taxon>Hominidae</taxon>
        <taxon>Pongo</taxon>
    </lineage>
</organism>
<name>SESN2_PONAB</name>
<comment type="function">
    <text evidence="1">Functions as an intracellular leucine sensor that negatively regulates the mTORC1 signaling pathway through the GATOR complex. In absence of leucine, binds the GATOR subcomplex GATOR2 and prevents mTORC1 signaling. Binding of leucine to SESN2 disrupts its interaction with GATOR2 thereby activating the TORC1 signaling pathway. This stress-inducible metabolic regulator also plays a role in protection against oxidative and genotoxic stresses. May negatively regulate protein translation in response to endoplasmic reticulum stress, via mTORC1. May positively regulate the transcription by NFE2L2 of genes involved in the response to oxidative stress by facilitating the SQSTM1-mediated autophagic degradation of KEAP1. May also mediate TP53 inhibition of TORC1 signaling upon genotoxic stress. Moreover, may prevent the accumulation of reactive oxygen species (ROS) through the alkylhydroperoxide reductase activity born by the N-terminal domain of the protein. Was originally reported to contribute to oxidative stress resistance by reducing PRDX1. However, this could not be confirmed.</text>
</comment>
<comment type="catalytic activity">
    <reaction evidence="1">
        <text>a hydroperoxide + L-cysteinyl-[protein] = S-hydroxy-L-cysteinyl-[protein] + an alcohol</text>
        <dbReference type="Rhea" id="RHEA:67124"/>
        <dbReference type="Rhea" id="RHEA-COMP:10131"/>
        <dbReference type="Rhea" id="RHEA-COMP:17193"/>
        <dbReference type="ChEBI" id="CHEBI:29950"/>
        <dbReference type="ChEBI" id="CHEBI:30879"/>
        <dbReference type="ChEBI" id="CHEBI:35924"/>
        <dbReference type="ChEBI" id="CHEBI:61973"/>
    </reaction>
    <physiologicalReaction direction="left-to-right" evidence="1">
        <dbReference type="Rhea" id="RHEA:67125"/>
    </physiologicalReaction>
</comment>
<comment type="subunit">
    <text evidence="1 2">Interacts with the GATOR2 complex which is composed of MIOS, SEC13, SEH1L, WDR24 and WDR59; the interaction is negatively regulated by leucine. Conveys leucine availability via direct interaction with SEH1L and WDR24 components of the GATOR2 complex. Interacts with RRAGA, RRAGB, RRAGC and RRAGD; may function as a guanine nucleotide dissociation inhibitor for RRAGs and regulate them (By similarity). May interact with the TORC2 complex (By similarity). Interacts with KEAP1, RBX1, SQSTM and ULK1; to regulate the degradation of KEAP1. May also associate with the complex composed of TSC1, TSC2 and the AMP-responsive protein kinase/AMPK to regulate TORC1 signaling. May interact with PRDX1 (By similarity).</text>
</comment>
<comment type="subcellular location">
    <subcellularLocation>
        <location evidence="1">Cytoplasm</location>
    </subcellularLocation>
</comment>
<comment type="domain">
    <text evidence="1">The N-terminal domain has an alkylhydroperoxide reductase activity.</text>
</comment>
<comment type="domain">
    <text evidence="1">The C-terminal domain mediates interaction with GATOR2 through which it regulates TORC1 signaling.</text>
</comment>
<comment type="PTM">
    <text evidence="1">Phosphorylated by ULK1 at multiple sites.</text>
</comment>
<comment type="PTM">
    <text evidence="1">Ubiquitinated at Lys-175 by RNF167 via 'Lys-63'-linked polyubiquitination in response to leucine deprivation: ubiquitination promotes SESN2-interaction with the GATOR2 complex, leading to inhibit the TORC1 signaling pathway. Deubiquitinated at Lys-175 by STAMBPL1, promoting the TORC1 signaling pathway. Ubiquitinated by RNF186; ubiquitination mediates proteasomal degradation.</text>
</comment>
<comment type="similarity">
    <text evidence="4">Belongs to the sestrin family.</text>
</comment>
<accession>Q5RCB4</accession>